<dbReference type="EC" id="1.17.99.9" evidence="1"/>
<dbReference type="EMBL" id="CP001029">
    <property type="protein sequence ID" value="ACB79796.1"/>
    <property type="molecule type" value="Genomic_DNA"/>
</dbReference>
<dbReference type="RefSeq" id="WP_012453543.1">
    <property type="nucleotide sequence ID" value="NC_010725.1"/>
</dbReference>
<dbReference type="SMR" id="B1ZGD8"/>
<dbReference type="STRING" id="441620.Mpop_1632"/>
<dbReference type="KEGG" id="mpo:Mpop_1632"/>
<dbReference type="eggNOG" id="COG1612">
    <property type="taxonomic scope" value="Bacteria"/>
</dbReference>
<dbReference type="HOGENOM" id="CLU_017627_0_0_5"/>
<dbReference type="OrthoDB" id="9793156at2"/>
<dbReference type="UniPathway" id="UPA00269">
    <property type="reaction ID" value="UER00713"/>
</dbReference>
<dbReference type="Proteomes" id="UP000007136">
    <property type="component" value="Chromosome"/>
</dbReference>
<dbReference type="GO" id="GO:0005886">
    <property type="term" value="C:plasma membrane"/>
    <property type="evidence" value="ECO:0007669"/>
    <property type="project" value="UniProtKB-SubCell"/>
</dbReference>
<dbReference type="GO" id="GO:0046872">
    <property type="term" value="F:metal ion binding"/>
    <property type="evidence" value="ECO:0007669"/>
    <property type="project" value="UniProtKB-KW"/>
</dbReference>
<dbReference type="GO" id="GO:0016653">
    <property type="term" value="F:oxidoreductase activity, acting on NAD(P)H, heme protein as acceptor"/>
    <property type="evidence" value="ECO:0007669"/>
    <property type="project" value="InterPro"/>
</dbReference>
<dbReference type="GO" id="GO:0006784">
    <property type="term" value="P:heme A biosynthetic process"/>
    <property type="evidence" value="ECO:0007669"/>
    <property type="project" value="UniProtKB-UniRule"/>
</dbReference>
<dbReference type="HAMAP" id="MF_01665">
    <property type="entry name" value="HemeA_synth_type2"/>
    <property type="match status" value="1"/>
</dbReference>
<dbReference type="InterPro" id="IPR003780">
    <property type="entry name" value="COX15/CtaA_fam"/>
</dbReference>
<dbReference type="InterPro" id="IPR023754">
    <property type="entry name" value="HemeA_Synthase_type2"/>
</dbReference>
<dbReference type="PANTHER" id="PTHR23289">
    <property type="entry name" value="CYTOCHROME C OXIDASE ASSEMBLY PROTEIN COX15"/>
    <property type="match status" value="1"/>
</dbReference>
<dbReference type="PANTHER" id="PTHR23289:SF2">
    <property type="entry name" value="CYTOCHROME C OXIDASE ASSEMBLY PROTEIN COX15 HOMOLOG"/>
    <property type="match status" value="1"/>
</dbReference>
<dbReference type="Pfam" id="PF02628">
    <property type="entry name" value="COX15-CtaA"/>
    <property type="match status" value="1"/>
</dbReference>
<accession>B1ZGD8</accession>
<keyword id="KW-1003">Cell membrane</keyword>
<keyword id="KW-0350">Heme biosynthesis</keyword>
<keyword id="KW-0408">Iron</keyword>
<keyword id="KW-0472">Membrane</keyword>
<keyword id="KW-0479">Metal-binding</keyword>
<keyword id="KW-0560">Oxidoreductase</keyword>
<keyword id="KW-0812">Transmembrane</keyword>
<keyword id="KW-1133">Transmembrane helix</keyword>
<reference key="1">
    <citation type="submission" date="2008-04" db="EMBL/GenBank/DDBJ databases">
        <title>Complete sequence of chromosome of Methylobacterium populi BJ001.</title>
        <authorList>
            <consortium name="US DOE Joint Genome Institute"/>
            <person name="Copeland A."/>
            <person name="Lucas S."/>
            <person name="Lapidus A."/>
            <person name="Glavina del Rio T."/>
            <person name="Dalin E."/>
            <person name="Tice H."/>
            <person name="Bruce D."/>
            <person name="Goodwin L."/>
            <person name="Pitluck S."/>
            <person name="Chertkov O."/>
            <person name="Brettin T."/>
            <person name="Detter J.C."/>
            <person name="Han C."/>
            <person name="Kuske C.R."/>
            <person name="Schmutz J."/>
            <person name="Larimer F."/>
            <person name="Land M."/>
            <person name="Hauser L."/>
            <person name="Kyrpides N."/>
            <person name="Mikhailova N."/>
            <person name="Marx C."/>
            <person name="Richardson P."/>
        </authorList>
    </citation>
    <scope>NUCLEOTIDE SEQUENCE [LARGE SCALE GENOMIC DNA]</scope>
    <source>
        <strain>ATCC BAA-705 / NCIMB 13946 / BJ001</strain>
    </source>
</reference>
<name>CTAA_METPB</name>
<sequence>MRLSKAPPADRFDAVPAASDRPGRGAVRAWLYLLAVLVVAMVAVGGATRLTGSGLSITEWRPVTGVVPPLNAADWAVEFDKYRDTPQYRILNQGIGLDGFKTLYWWEWGHRLLGRIVGLVFFLPFAWFWWRGWLGRRLLLGLLGLGLLGGLQGAIGWIMVASGLQPGMTAVAPLKLALHLTTASLILAGLVWLAAGTRALALAPAPEPVRRVAGLLPVLVLIQIWLGGLVAGSKAGLLYNTWPDMDGMLVPPARMLFDKVPFIENFVDNLALVQFNHRLFAYLVVLVALAHAVQAVRMAPGAAAGRAMGVAALTLAQMGLGIVTLLLQVPLWAGLAHQVFAMAVLIMATVHARLSVGVPAASAPTGAAVPIGLEALAGRGV</sequence>
<proteinExistence type="inferred from homology"/>
<organism>
    <name type="scientific">Methylorubrum populi (strain ATCC BAA-705 / NCIMB 13946 / BJ001)</name>
    <name type="common">Methylobacterium populi</name>
    <dbReference type="NCBI Taxonomy" id="441620"/>
    <lineage>
        <taxon>Bacteria</taxon>
        <taxon>Pseudomonadati</taxon>
        <taxon>Pseudomonadota</taxon>
        <taxon>Alphaproteobacteria</taxon>
        <taxon>Hyphomicrobiales</taxon>
        <taxon>Methylobacteriaceae</taxon>
        <taxon>Methylorubrum</taxon>
    </lineage>
</organism>
<evidence type="ECO:0000255" key="1">
    <source>
        <dbReference type="HAMAP-Rule" id="MF_01665"/>
    </source>
</evidence>
<comment type="function">
    <text evidence="1">Catalyzes the conversion of heme O to heme A by two successive hydroxylations of the methyl group at C8. The first hydroxylation forms heme I, the second hydroxylation results in an unstable dihydroxymethyl group, which spontaneously dehydrates, resulting in the formyl group of heme A.</text>
</comment>
<comment type="catalytic activity">
    <reaction evidence="1">
        <text>Fe(II)-heme o + 2 A + H2O = Fe(II)-heme a + 2 AH2</text>
        <dbReference type="Rhea" id="RHEA:63388"/>
        <dbReference type="ChEBI" id="CHEBI:13193"/>
        <dbReference type="ChEBI" id="CHEBI:15377"/>
        <dbReference type="ChEBI" id="CHEBI:17499"/>
        <dbReference type="ChEBI" id="CHEBI:60530"/>
        <dbReference type="ChEBI" id="CHEBI:61715"/>
        <dbReference type="EC" id="1.17.99.9"/>
    </reaction>
    <physiologicalReaction direction="left-to-right" evidence="1">
        <dbReference type="Rhea" id="RHEA:63389"/>
    </physiologicalReaction>
</comment>
<comment type="cofactor">
    <cofactor evidence="1">
        <name>heme b</name>
        <dbReference type="ChEBI" id="CHEBI:60344"/>
    </cofactor>
</comment>
<comment type="pathway">
    <text evidence="1">Porphyrin-containing compound metabolism; heme A biosynthesis; heme A from heme O: step 1/1.</text>
</comment>
<comment type="subunit">
    <text evidence="1">Interacts with CtaB.</text>
</comment>
<comment type="subcellular location">
    <subcellularLocation>
        <location evidence="1">Cell membrane</location>
        <topology evidence="1">Multi-pass membrane protein</topology>
    </subcellularLocation>
</comment>
<comment type="similarity">
    <text evidence="1">Belongs to the COX15/CtaA family. Type 2 subfamily.</text>
</comment>
<protein>
    <recommendedName>
        <fullName evidence="1">Heme A synthase</fullName>
        <shortName evidence="1">HAS</shortName>
        <ecNumber evidence="1">1.17.99.9</ecNumber>
    </recommendedName>
    <alternativeName>
        <fullName evidence="1">Cytochrome aa3-controlling protein</fullName>
    </alternativeName>
</protein>
<feature type="chain" id="PRO_0000349045" description="Heme A synthase">
    <location>
        <begin position="1"/>
        <end position="381"/>
    </location>
</feature>
<feature type="transmembrane region" description="Helical" evidence="1">
    <location>
        <begin position="25"/>
        <end position="45"/>
    </location>
</feature>
<feature type="transmembrane region" description="Helical" evidence="1">
    <location>
        <begin position="112"/>
        <end position="132"/>
    </location>
</feature>
<feature type="transmembrane region" description="Helical" evidence="1">
    <location>
        <begin position="138"/>
        <end position="158"/>
    </location>
</feature>
<feature type="transmembrane region" description="Helical" evidence="1">
    <location>
        <begin position="176"/>
        <end position="196"/>
    </location>
</feature>
<feature type="transmembrane region" description="Helical" evidence="1">
    <location>
        <begin position="212"/>
        <end position="232"/>
    </location>
</feature>
<feature type="transmembrane region" description="Helical" evidence="1">
    <location>
        <begin position="279"/>
        <end position="299"/>
    </location>
</feature>
<feature type="transmembrane region" description="Helical" evidence="1">
    <location>
        <begin position="307"/>
        <end position="327"/>
    </location>
</feature>
<feature type="transmembrane region" description="Helical" evidence="1">
    <location>
        <begin position="329"/>
        <end position="349"/>
    </location>
</feature>
<feature type="binding site" description="axial binding residue" evidence="1">
    <location>
        <position position="277"/>
    </location>
    <ligand>
        <name>heme</name>
        <dbReference type="ChEBI" id="CHEBI:30413"/>
    </ligand>
    <ligandPart>
        <name>Fe</name>
        <dbReference type="ChEBI" id="CHEBI:18248"/>
    </ligandPart>
</feature>
<feature type="binding site" description="axial binding residue" evidence="1">
    <location>
        <position position="337"/>
    </location>
    <ligand>
        <name>heme</name>
        <dbReference type="ChEBI" id="CHEBI:30413"/>
    </ligand>
    <ligandPart>
        <name>Fe</name>
        <dbReference type="ChEBI" id="CHEBI:18248"/>
    </ligandPart>
</feature>
<gene>
    <name evidence="1" type="primary">ctaA</name>
    <name type="ordered locus">Mpop_1632</name>
</gene>